<sequence>MHRYRSHTCGALSTAQVGEIVRLSGWCHRIRDHGGVLFIDLRDHYGLTQVVVDPDSAAFKDAEKVRAEWVIRIDGKVRLRPEGTENPDLATGAVEVYATELEVLGPSAELPLPVFGDVEYPEETRLRYRFLDLRREKLHRNIMTRGAIIDAMRSRMKGQGFFEFQTPILTASSPEGARDFLVPSRLHPGKFYALPQAPQQYKQLIMMSGFDRYFQIAPCFRDEDPRADRLPGEFYQLDLEMSFVEQEDIFAAVEPVITGVFEQFAEGKPVTQKWPRIPYAESLRKYGTDKPDLRNPLVMQNVSEHFRGSGFKVFARMLEVEKNEVWAIPAPGGGSRAFCDRMNSWAQSEGQPGLGYIMWRDLSADAAAGGEKAVKDALEKSRGPGAGEGHVVEPGVVGAGPLANNIGPERTEAIRAQLDLKAGDAAFFVAGDPDKFVKFAGLARTRVGEELNLVDKDRFELAWIVDFPFYEYSEEEKKVDFSHNPFSMPQGGLDALNTQDPLSIKAFQYDIACNGYEIASGGIRNHRPEAMVKAFEIAGYDAQTVEERFGGMYRAFQYGAPPHGGMAAGVDRIVMLLCGVTNLREISLFPMNQQALDLLMGAPAEAAPKQLRELHIRPAPQAK</sequence>
<organism>
    <name type="scientific">Xanthobacter autotrophicus (strain ATCC BAA-1158 / Py2)</name>
    <dbReference type="NCBI Taxonomy" id="78245"/>
    <lineage>
        <taxon>Bacteria</taxon>
        <taxon>Pseudomonadati</taxon>
        <taxon>Pseudomonadota</taxon>
        <taxon>Alphaproteobacteria</taxon>
        <taxon>Hyphomicrobiales</taxon>
        <taxon>Xanthobacteraceae</taxon>
        <taxon>Xanthobacter</taxon>
    </lineage>
</organism>
<accession>A7IK27</accession>
<gene>
    <name evidence="1" type="primary">aspS</name>
    <name type="ordered locus">Xaut_3140</name>
</gene>
<name>SYDND_XANP2</name>
<keyword id="KW-0030">Aminoacyl-tRNA synthetase</keyword>
<keyword id="KW-0067">ATP-binding</keyword>
<keyword id="KW-0963">Cytoplasm</keyword>
<keyword id="KW-0436">Ligase</keyword>
<keyword id="KW-0547">Nucleotide-binding</keyword>
<keyword id="KW-0648">Protein biosynthesis</keyword>
<keyword id="KW-1185">Reference proteome</keyword>
<dbReference type="EC" id="6.1.1.23" evidence="1"/>
<dbReference type="EMBL" id="CP000781">
    <property type="protein sequence ID" value="ABS68370.1"/>
    <property type="molecule type" value="Genomic_DNA"/>
</dbReference>
<dbReference type="SMR" id="A7IK27"/>
<dbReference type="STRING" id="78245.Xaut_3140"/>
<dbReference type="KEGG" id="xau:Xaut_3140"/>
<dbReference type="eggNOG" id="COG0173">
    <property type="taxonomic scope" value="Bacteria"/>
</dbReference>
<dbReference type="HOGENOM" id="CLU_014330_3_2_5"/>
<dbReference type="OrthoDB" id="9802326at2"/>
<dbReference type="PhylomeDB" id="A7IK27"/>
<dbReference type="Proteomes" id="UP000002417">
    <property type="component" value="Chromosome"/>
</dbReference>
<dbReference type="GO" id="GO:0005737">
    <property type="term" value="C:cytoplasm"/>
    <property type="evidence" value="ECO:0007669"/>
    <property type="project" value="UniProtKB-SubCell"/>
</dbReference>
<dbReference type="GO" id="GO:0004815">
    <property type="term" value="F:aspartate-tRNA ligase activity"/>
    <property type="evidence" value="ECO:0007669"/>
    <property type="project" value="UniProtKB-UniRule"/>
</dbReference>
<dbReference type="GO" id="GO:0050560">
    <property type="term" value="F:aspartate-tRNA(Asn) ligase activity"/>
    <property type="evidence" value="ECO:0007669"/>
    <property type="project" value="UniProtKB-EC"/>
</dbReference>
<dbReference type="GO" id="GO:0005524">
    <property type="term" value="F:ATP binding"/>
    <property type="evidence" value="ECO:0007669"/>
    <property type="project" value="UniProtKB-UniRule"/>
</dbReference>
<dbReference type="GO" id="GO:0003676">
    <property type="term" value="F:nucleic acid binding"/>
    <property type="evidence" value="ECO:0007669"/>
    <property type="project" value="InterPro"/>
</dbReference>
<dbReference type="GO" id="GO:0006422">
    <property type="term" value="P:aspartyl-tRNA aminoacylation"/>
    <property type="evidence" value="ECO:0007669"/>
    <property type="project" value="UniProtKB-UniRule"/>
</dbReference>
<dbReference type="CDD" id="cd04317">
    <property type="entry name" value="EcAspRS_like_N"/>
    <property type="match status" value="1"/>
</dbReference>
<dbReference type="Gene3D" id="3.30.930.10">
    <property type="entry name" value="Bira Bifunctional Protein, Domain 2"/>
    <property type="match status" value="1"/>
</dbReference>
<dbReference type="Gene3D" id="3.30.1360.30">
    <property type="entry name" value="GAD-like domain"/>
    <property type="match status" value="1"/>
</dbReference>
<dbReference type="Gene3D" id="2.40.50.140">
    <property type="entry name" value="Nucleic acid-binding proteins"/>
    <property type="match status" value="1"/>
</dbReference>
<dbReference type="HAMAP" id="MF_00044">
    <property type="entry name" value="Asp_tRNA_synth_type1"/>
    <property type="match status" value="1"/>
</dbReference>
<dbReference type="InterPro" id="IPR004364">
    <property type="entry name" value="Aa-tRNA-synt_II"/>
</dbReference>
<dbReference type="InterPro" id="IPR006195">
    <property type="entry name" value="aa-tRNA-synth_II"/>
</dbReference>
<dbReference type="InterPro" id="IPR045864">
    <property type="entry name" value="aa-tRNA-synth_II/BPL/LPL"/>
</dbReference>
<dbReference type="InterPro" id="IPR004524">
    <property type="entry name" value="Asp-tRNA-ligase_1"/>
</dbReference>
<dbReference type="InterPro" id="IPR047089">
    <property type="entry name" value="Asp-tRNA-ligase_1_N"/>
</dbReference>
<dbReference type="InterPro" id="IPR002312">
    <property type="entry name" value="Asp/Asn-tRNA-synth_IIb"/>
</dbReference>
<dbReference type="InterPro" id="IPR004115">
    <property type="entry name" value="GAD-like_sf"/>
</dbReference>
<dbReference type="InterPro" id="IPR012340">
    <property type="entry name" value="NA-bd_OB-fold"/>
</dbReference>
<dbReference type="InterPro" id="IPR004365">
    <property type="entry name" value="NA-bd_OB_tRNA"/>
</dbReference>
<dbReference type="NCBIfam" id="TIGR00459">
    <property type="entry name" value="aspS_bact"/>
    <property type="match status" value="1"/>
</dbReference>
<dbReference type="NCBIfam" id="NF001750">
    <property type="entry name" value="PRK00476.1"/>
    <property type="match status" value="1"/>
</dbReference>
<dbReference type="PANTHER" id="PTHR22594:SF5">
    <property type="entry name" value="ASPARTATE--TRNA LIGASE, MITOCHONDRIAL"/>
    <property type="match status" value="1"/>
</dbReference>
<dbReference type="PANTHER" id="PTHR22594">
    <property type="entry name" value="ASPARTYL/LYSYL-TRNA SYNTHETASE"/>
    <property type="match status" value="1"/>
</dbReference>
<dbReference type="Pfam" id="PF00152">
    <property type="entry name" value="tRNA-synt_2"/>
    <property type="match status" value="1"/>
</dbReference>
<dbReference type="Pfam" id="PF01336">
    <property type="entry name" value="tRNA_anti-codon"/>
    <property type="match status" value="1"/>
</dbReference>
<dbReference type="PRINTS" id="PR01042">
    <property type="entry name" value="TRNASYNTHASP"/>
</dbReference>
<dbReference type="SUPFAM" id="SSF55681">
    <property type="entry name" value="Class II aaRS and biotin synthetases"/>
    <property type="match status" value="1"/>
</dbReference>
<dbReference type="SUPFAM" id="SSF55261">
    <property type="entry name" value="GAD domain-like"/>
    <property type="match status" value="1"/>
</dbReference>
<dbReference type="SUPFAM" id="SSF50249">
    <property type="entry name" value="Nucleic acid-binding proteins"/>
    <property type="match status" value="1"/>
</dbReference>
<dbReference type="PROSITE" id="PS50862">
    <property type="entry name" value="AA_TRNA_LIGASE_II"/>
    <property type="match status" value="1"/>
</dbReference>
<feature type="chain" id="PRO_1000091063" description="Aspartate--tRNA(Asp/Asn) ligase">
    <location>
        <begin position="1"/>
        <end position="623"/>
    </location>
</feature>
<feature type="region of interest" description="Aspartate" evidence="1">
    <location>
        <begin position="199"/>
        <end position="202"/>
    </location>
</feature>
<feature type="binding site" evidence="1">
    <location>
        <position position="175"/>
    </location>
    <ligand>
        <name>L-aspartate</name>
        <dbReference type="ChEBI" id="CHEBI:29991"/>
    </ligand>
</feature>
<feature type="binding site" evidence="1">
    <location>
        <begin position="221"/>
        <end position="223"/>
    </location>
    <ligand>
        <name>ATP</name>
        <dbReference type="ChEBI" id="CHEBI:30616"/>
    </ligand>
</feature>
<feature type="binding site" evidence="1">
    <location>
        <position position="221"/>
    </location>
    <ligand>
        <name>L-aspartate</name>
        <dbReference type="ChEBI" id="CHEBI:29991"/>
    </ligand>
</feature>
<feature type="binding site" evidence="1">
    <location>
        <position position="483"/>
    </location>
    <ligand>
        <name>L-aspartate</name>
        <dbReference type="ChEBI" id="CHEBI:29991"/>
    </ligand>
</feature>
<feature type="binding site" evidence="1">
    <location>
        <position position="517"/>
    </location>
    <ligand>
        <name>ATP</name>
        <dbReference type="ChEBI" id="CHEBI:30616"/>
    </ligand>
</feature>
<feature type="binding site" evidence="1">
    <location>
        <position position="524"/>
    </location>
    <ligand>
        <name>L-aspartate</name>
        <dbReference type="ChEBI" id="CHEBI:29991"/>
    </ligand>
</feature>
<feature type="binding site" evidence="1">
    <location>
        <begin position="569"/>
        <end position="572"/>
    </location>
    <ligand>
        <name>ATP</name>
        <dbReference type="ChEBI" id="CHEBI:30616"/>
    </ligand>
</feature>
<feature type="site" description="Important for tRNA non-discrimination" evidence="1">
    <location>
        <position position="33"/>
    </location>
</feature>
<feature type="site" description="Important for tRNA non-discrimination" evidence="1">
    <location>
        <position position="83"/>
    </location>
</feature>
<protein>
    <recommendedName>
        <fullName evidence="1">Aspartate--tRNA(Asp/Asn) ligase</fullName>
        <ecNumber evidence="1">6.1.1.23</ecNumber>
    </recommendedName>
    <alternativeName>
        <fullName evidence="1">Aspartyl-tRNA synthetase</fullName>
        <shortName evidence="1">AspRS</shortName>
    </alternativeName>
    <alternativeName>
        <fullName evidence="1">Non-discriminating aspartyl-tRNA synthetase</fullName>
        <shortName evidence="1">ND-AspRS</shortName>
    </alternativeName>
</protein>
<evidence type="ECO:0000255" key="1">
    <source>
        <dbReference type="HAMAP-Rule" id="MF_00044"/>
    </source>
</evidence>
<proteinExistence type="inferred from homology"/>
<comment type="function">
    <text evidence="1">Aspartyl-tRNA synthetase with relaxed tRNA specificity since it is able to aspartylate not only its cognate tRNA(Asp) but also tRNA(Asn). Reaction proceeds in two steps: L-aspartate is first activated by ATP to form Asp-AMP and then transferred to the acceptor end of tRNA(Asp/Asn).</text>
</comment>
<comment type="catalytic activity">
    <reaction evidence="1">
        <text>tRNA(Asx) + L-aspartate + ATP = L-aspartyl-tRNA(Asx) + AMP + diphosphate</text>
        <dbReference type="Rhea" id="RHEA:18349"/>
        <dbReference type="Rhea" id="RHEA-COMP:9710"/>
        <dbReference type="Rhea" id="RHEA-COMP:9711"/>
        <dbReference type="ChEBI" id="CHEBI:29991"/>
        <dbReference type="ChEBI" id="CHEBI:30616"/>
        <dbReference type="ChEBI" id="CHEBI:33019"/>
        <dbReference type="ChEBI" id="CHEBI:78442"/>
        <dbReference type="ChEBI" id="CHEBI:78516"/>
        <dbReference type="ChEBI" id="CHEBI:456215"/>
        <dbReference type="EC" id="6.1.1.23"/>
    </reaction>
</comment>
<comment type="subunit">
    <text evidence="1">Homodimer.</text>
</comment>
<comment type="subcellular location">
    <subcellularLocation>
        <location evidence="1">Cytoplasm</location>
    </subcellularLocation>
</comment>
<comment type="similarity">
    <text evidence="1">Belongs to the class-II aminoacyl-tRNA synthetase family. Type 1 subfamily.</text>
</comment>
<reference key="1">
    <citation type="submission" date="2007-07" db="EMBL/GenBank/DDBJ databases">
        <title>Complete sequence of chromosome of Xanthobacter autotrophicus Py2.</title>
        <authorList>
            <consortium name="US DOE Joint Genome Institute"/>
            <person name="Copeland A."/>
            <person name="Lucas S."/>
            <person name="Lapidus A."/>
            <person name="Barry K."/>
            <person name="Glavina del Rio T."/>
            <person name="Hammon N."/>
            <person name="Israni S."/>
            <person name="Dalin E."/>
            <person name="Tice H."/>
            <person name="Pitluck S."/>
            <person name="Sims D."/>
            <person name="Brettin T."/>
            <person name="Bruce D."/>
            <person name="Detter J.C."/>
            <person name="Han C."/>
            <person name="Tapia R."/>
            <person name="Brainard J."/>
            <person name="Schmutz J."/>
            <person name="Larimer F."/>
            <person name="Land M."/>
            <person name="Hauser L."/>
            <person name="Kyrpides N."/>
            <person name="Kim E."/>
            <person name="Ensigns S.A."/>
            <person name="Richardson P."/>
        </authorList>
    </citation>
    <scope>NUCLEOTIDE SEQUENCE [LARGE SCALE GENOMIC DNA]</scope>
    <source>
        <strain>ATCC BAA-1158 / Py2</strain>
    </source>
</reference>